<evidence type="ECO:0000255" key="1">
    <source>
        <dbReference type="HAMAP-Rule" id="MF_00752"/>
    </source>
</evidence>
<sequence>MAQRTRLGDILRPLNSEYGKVAPGWGTTPVMGVFMALFLVFLLIILQLYNKSILIQDVRVGW</sequence>
<gene>
    <name evidence="1" type="primary">psbH</name>
    <name type="ordered locus">Ava_4450</name>
</gene>
<name>PSBH_TRIV2</name>
<reference key="1">
    <citation type="journal article" date="2014" name="Stand. Genomic Sci.">
        <title>Complete genome sequence of Anabaena variabilis ATCC 29413.</title>
        <authorList>
            <person name="Thiel T."/>
            <person name="Pratte B.S."/>
            <person name="Zhong J."/>
            <person name="Goodwin L."/>
            <person name="Copeland A."/>
            <person name="Lucas S."/>
            <person name="Han C."/>
            <person name="Pitluck S."/>
            <person name="Land M.L."/>
            <person name="Kyrpides N.C."/>
            <person name="Woyke T."/>
        </authorList>
    </citation>
    <scope>NUCLEOTIDE SEQUENCE [LARGE SCALE GENOMIC DNA]</scope>
    <source>
        <strain>ATCC 29413 / PCC 7937</strain>
    </source>
</reference>
<proteinExistence type="inferred from homology"/>
<accession>Q3M4N8</accession>
<keyword id="KW-0472">Membrane</keyword>
<keyword id="KW-0602">Photosynthesis</keyword>
<keyword id="KW-0604">Photosystem II</keyword>
<keyword id="KW-0793">Thylakoid</keyword>
<keyword id="KW-0812">Transmembrane</keyword>
<keyword id="KW-1133">Transmembrane helix</keyword>
<organism>
    <name type="scientific">Trichormus variabilis (strain ATCC 29413 / PCC 7937)</name>
    <name type="common">Anabaena variabilis</name>
    <dbReference type="NCBI Taxonomy" id="240292"/>
    <lineage>
        <taxon>Bacteria</taxon>
        <taxon>Bacillati</taxon>
        <taxon>Cyanobacteriota</taxon>
        <taxon>Cyanophyceae</taxon>
        <taxon>Nostocales</taxon>
        <taxon>Nostocaceae</taxon>
        <taxon>Trichormus</taxon>
    </lineage>
</organism>
<dbReference type="EMBL" id="CP000117">
    <property type="protein sequence ID" value="ABA24048.1"/>
    <property type="molecule type" value="Genomic_DNA"/>
</dbReference>
<dbReference type="RefSeq" id="WP_010995020.1">
    <property type="nucleotide sequence ID" value="NC_007413.1"/>
</dbReference>
<dbReference type="SMR" id="Q3M4N8"/>
<dbReference type="STRING" id="240292.Ava_4450"/>
<dbReference type="GeneID" id="58722019"/>
<dbReference type="KEGG" id="ava:Ava_4450"/>
<dbReference type="eggNOG" id="ENOG50332MV">
    <property type="taxonomic scope" value="Bacteria"/>
</dbReference>
<dbReference type="HOGENOM" id="CLU_190203_0_0_3"/>
<dbReference type="Proteomes" id="UP000002533">
    <property type="component" value="Chromosome"/>
</dbReference>
<dbReference type="GO" id="GO:0009523">
    <property type="term" value="C:photosystem II"/>
    <property type="evidence" value="ECO:0007669"/>
    <property type="project" value="UniProtKB-KW"/>
</dbReference>
<dbReference type="GO" id="GO:0031676">
    <property type="term" value="C:plasma membrane-derived thylakoid membrane"/>
    <property type="evidence" value="ECO:0007669"/>
    <property type="project" value="UniProtKB-SubCell"/>
</dbReference>
<dbReference type="GO" id="GO:0042301">
    <property type="term" value="F:phosphate ion binding"/>
    <property type="evidence" value="ECO:0007669"/>
    <property type="project" value="InterPro"/>
</dbReference>
<dbReference type="GO" id="GO:0015979">
    <property type="term" value="P:photosynthesis"/>
    <property type="evidence" value="ECO:0007669"/>
    <property type="project" value="UniProtKB-UniRule"/>
</dbReference>
<dbReference type="GO" id="GO:0050821">
    <property type="term" value="P:protein stabilization"/>
    <property type="evidence" value="ECO:0007669"/>
    <property type="project" value="InterPro"/>
</dbReference>
<dbReference type="Gene3D" id="1.20.5.880">
    <property type="entry name" value="Photosystem II reaction center protein H"/>
    <property type="match status" value="1"/>
</dbReference>
<dbReference type="HAMAP" id="MF_00752">
    <property type="entry name" value="PSII_PsbH"/>
    <property type="match status" value="1"/>
</dbReference>
<dbReference type="InterPro" id="IPR001056">
    <property type="entry name" value="PSII_PsbH"/>
</dbReference>
<dbReference type="InterPro" id="IPR036863">
    <property type="entry name" value="PSII_PsbH_sf"/>
</dbReference>
<dbReference type="NCBIfam" id="NF002728">
    <property type="entry name" value="PRK02624.1"/>
    <property type="match status" value="1"/>
</dbReference>
<dbReference type="PANTHER" id="PTHR34469">
    <property type="entry name" value="PHOTOSYSTEM II REACTION CENTER PROTEIN H"/>
    <property type="match status" value="1"/>
</dbReference>
<dbReference type="PANTHER" id="PTHR34469:SF4">
    <property type="entry name" value="PHOTOSYSTEM II REACTION CENTER PROTEIN H"/>
    <property type="match status" value="1"/>
</dbReference>
<dbReference type="Pfam" id="PF00737">
    <property type="entry name" value="PsbH"/>
    <property type="match status" value="1"/>
</dbReference>
<dbReference type="SUPFAM" id="SSF161025">
    <property type="entry name" value="Photosystem II 10 kDa phosphoprotein PsbH"/>
    <property type="match status" value="1"/>
</dbReference>
<comment type="function">
    <text evidence="1">One of the components of the core complex of photosystem II (PSII), required for its stability and/or assembly. PSII is a light-driven water:plastoquinone oxidoreductase that uses light energy to abstract electrons from H(2)O, generating O(2) and a proton gradient subsequently used for ATP formation. It consists of a core antenna complex that captures photons, and an electron transfer chain that converts photonic excitation into a charge separation.</text>
</comment>
<comment type="subunit">
    <text evidence="1">PSII is composed of 1 copy each of membrane proteins PsbA, PsbB, PsbC, PsbD, PsbE, PsbF, PsbH, PsbI, PsbJ, PsbK, PsbL, PsbM, PsbT, PsbX, PsbY, PsbZ, Psb30/Ycf12, peripheral proteins PsbO, CyanoQ (PsbQ), PsbU, PsbV and a large number of cofactors. It forms dimeric complexes.</text>
</comment>
<comment type="subcellular location">
    <subcellularLocation>
        <location evidence="1">Cellular thylakoid membrane</location>
        <topology evidence="1">Single-pass membrane protein</topology>
    </subcellularLocation>
</comment>
<comment type="similarity">
    <text evidence="1">Belongs to the PsbH family.</text>
</comment>
<feature type="chain" id="PRO_1000046584" description="Photosystem II reaction center protein H">
    <location>
        <begin position="1"/>
        <end position="62"/>
    </location>
</feature>
<feature type="transmembrane region" description="Helical" evidence="1">
    <location>
        <begin position="29"/>
        <end position="49"/>
    </location>
</feature>
<protein>
    <recommendedName>
        <fullName evidence="1">Photosystem II reaction center protein H</fullName>
        <shortName evidence="1">PSII-H</shortName>
    </recommendedName>
</protein>